<name>GRK4_HUMAN</name>
<reference key="1">
    <citation type="journal article" date="1992" name="Hum. Mol. Genet.">
        <title>A novel G protein-coupled receptor kinase gene cloned from 4p16.3.</title>
        <authorList>
            <person name="Ambrose C."/>
            <person name="James M."/>
            <person name="Barnes G."/>
            <person name="Lin C."/>
            <person name="Bates G."/>
            <person name="Altherr M."/>
            <person name="Duyao M."/>
            <person name="Groot N."/>
            <person name="Church D."/>
            <person name="Wasmuth J.J."/>
            <person name="Lehrach H."/>
            <person name="Housman D."/>
            <person name="Buckler A.J."/>
            <person name="Gusella J.F."/>
            <person name="McDonald M.E."/>
        </authorList>
    </citation>
    <scope>NUCLEOTIDE SEQUENCE [GENOMIC DNA] (ISOFORM 3)</scope>
    <scope>VARIANT ALA-486</scope>
</reference>
<reference key="2">
    <citation type="journal article" date="1997" name="J. Biol. Chem.">
        <title>G protein-coupled receptor kinase GRK4. Molecular analysis of the four isoforms and ultrastructural localization in spermatozoa and germinal cells.</title>
        <authorList>
            <person name="Sallese M."/>
            <person name="Mariggio S."/>
            <person name="Collodel G."/>
            <person name="Moretti E."/>
            <person name="Piomboni P."/>
            <person name="Baccetti B."/>
            <person name="de Blasi A."/>
        </authorList>
    </citation>
    <scope>NUCLEOTIDE SEQUENCE [MRNA] (ISOFORMS 1; 2; 3 AND 4)</scope>
    <scope>VARIANT ALA-486</scope>
    <source>
        <tissue>Testis</tissue>
    </source>
</reference>
<reference key="3">
    <citation type="journal article" date="1996" name="J. Biol. Chem.">
        <title>Characterization of the G protein-coupled receptor kinase GRK4. Identification of four splice variants.</title>
        <authorList>
            <person name="Premont R.T."/>
            <person name="Macrae A.D."/>
            <person name="Stoffel R.H."/>
            <person name="Chung N."/>
            <person name="Pitcher J.A."/>
            <person name="Ambrose C."/>
            <person name="Inglese J."/>
            <person name="MacDonald M.E."/>
            <person name="Lefkowitz R.J."/>
        </authorList>
    </citation>
    <scope>NUCLEOTIDE SEQUENCE [GENOMIC DNA / MRNA]</scope>
    <scope>ALTERNATIVE SPLICING</scope>
    <scope>FUNCTION</scope>
    <scope>TISSUE SPECIFICITY</scope>
    <scope>SUBCELLULAR LOCATION</scope>
    <scope>PALMITOYLATION</scope>
    <scope>VARIANT ALA-486</scope>
    <source>
        <tissue>Testis</tissue>
    </source>
</reference>
<reference key="4">
    <citation type="journal article" date="1994" name="Biochem. Biophys. Res. Commun.">
        <title>Two isoforms of G protein-coupled receptor kinase 4 identified by molecular cloning.</title>
        <authorList>
            <person name="Sallese M."/>
            <person name="Lombardi M.S."/>
            <person name="de Blasi A."/>
        </authorList>
    </citation>
    <scope>NUCLEOTIDE SEQUENCE [MRNA] (ISOFORMS 1 AND 2)</scope>
    <scope>VARIANT ALA-486</scope>
    <source>
        <tissue>Brain</tissue>
    </source>
</reference>
<reference key="5">
    <citation type="submission" date="2005-04" db="EMBL/GenBank/DDBJ databases">
        <authorList>
            <person name="Totoki Y."/>
            <person name="Toyoda A."/>
            <person name="Takeda T."/>
            <person name="Sakaki Y."/>
            <person name="Tanaka A."/>
            <person name="Yokoyama S."/>
        </authorList>
    </citation>
    <scope>NUCLEOTIDE SEQUENCE [LARGE SCALE MRNA] (ISOFORM 3)</scope>
    <source>
        <tissue>Kidney</tissue>
    </source>
</reference>
<reference key="6">
    <citation type="journal article" date="2005" name="Nature">
        <title>Generation and annotation of the DNA sequences of human chromosomes 2 and 4.</title>
        <authorList>
            <person name="Hillier L.W."/>
            <person name="Graves T.A."/>
            <person name="Fulton R.S."/>
            <person name="Fulton L.A."/>
            <person name="Pepin K.H."/>
            <person name="Minx P."/>
            <person name="Wagner-McPherson C."/>
            <person name="Layman D."/>
            <person name="Wylie K."/>
            <person name="Sekhon M."/>
            <person name="Becker M.C."/>
            <person name="Fewell G.A."/>
            <person name="Delehaunty K.D."/>
            <person name="Miner T.L."/>
            <person name="Nash W.E."/>
            <person name="Kremitzki C."/>
            <person name="Oddy L."/>
            <person name="Du H."/>
            <person name="Sun H."/>
            <person name="Bradshaw-Cordum H."/>
            <person name="Ali J."/>
            <person name="Carter J."/>
            <person name="Cordes M."/>
            <person name="Harris A."/>
            <person name="Isak A."/>
            <person name="van Brunt A."/>
            <person name="Nguyen C."/>
            <person name="Du F."/>
            <person name="Courtney L."/>
            <person name="Kalicki J."/>
            <person name="Ozersky P."/>
            <person name="Abbott S."/>
            <person name="Armstrong J."/>
            <person name="Belter E.A."/>
            <person name="Caruso L."/>
            <person name="Cedroni M."/>
            <person name="Cotton M."/>
            <person name="Davidson T."/>
            <person name="Desai A."/>
            <person name="Elliott G."/>
            <person name="Erb T."/>
            <person name="Fronick C."/>
            <person name="Gaige T."/>
            <person name="Haakenson W."/>
            <person name="Haglund K."/>
            <person name="Holmes A."/>
            <person name="Harkins R."/>
            <person name="Kim K."/>
            <person name="Kruchowski S.S."/>
            <person name="Strong C.M."/>
            <person name="Grewal N."/>
            <person name="Goyea E."/>
            <person name="Hou S."/>
            <person name="Levy A."/>
            <person name="Martinka S."/>
            <person name="Mead K."/>
            <person name="McLellan M.D."/>
            <person name="Meyer R."/>
            <person name="Randall-Maher J."/>
            <person name="Tomlinson C."/>
            <person name="Dauphin-Kohlberg S."/>
            <person name="Kozlowicz-Reilly A."/>
            <person name="Shah N."/>
            <person name="Swearengen-Shahid S."/>
            <person name="Snider J."/>
            <person name="Strong J.T."/>
            <person name="Thompson J."/>
            <person name="Yoakum M."/>
            <person name="Leonard S."/>
            <person name="Pearman C."/>
            <person name="Trani L."/>
            <person name="Radionenko M."/>
            <person name="Waligorski J.E."/>
            <person name="Wang C."/>
            <person name="Rock S.M."/>
            <person name="Tin-Wollam A.-M."/>
            <person name="Maupin R."/>
            <person name="Latreille P."/>
            <person name="Wendl M.C."/>
            <person name="Yang S.-P."/>
            <person name="Pohl C."/>
            <person name="Wallis J.W."/>
            <person name="Spieth J."/>
            <person name="Bieri T.A."/>
            <person name="Berkowicz N."/>
            <person name="Nelson J.O."/>
            <person name="Osborne J."/>
            <person name="Ding L."/>
            <person name="Meyer R."/>
            <person name="Sabo A."/>
            <person name="Shotland Y."/>
            <person name="Sinha P."/>
            <person name="Wohldmann P.E."/>
            <person name="Cook L.L."/>
            <person name="Hickenbotham M.T."/>
            <person name="Eldred J."/>
            <person name="Williams D."/>
            <person name="Jones T.A."/>
            <person name="She X."/>
            <person name="Ciccarelli F.D."/>
            <person name="Izaurralde E."/>
            <person name="Taylor J."/>
            <person name="Schmutz J."/>
            <person name="Myers R.M."/>
            <person name="Cox D.R."/>
            <person name="Huang X."/>
            <person name="McPherson J.D."/>
            <person name="Mardis E.R."/>
            <person name="Clifton S.W."/>
            <person name="Warren W.C."/>
            <person name="Chinwalla A.T."/>
            <person name="Eddy S.R."/>
            <person name="Marra M.A."/>
            <person name="Ovcharenko I."/>
            <person name="Furey T.S."/>
            <person name="Miller W."/>
            <person name="Eichler E.E."/>
            <person name="Bork P."/>
            <person name="Suyama M."/>
            <person name="Torrents D."/>
            <person name="Waterston R.H."/>
            <person name="Wilson R.K."/>
        </authorList>
    </citation>
    <scope>NUCLEOTIDE SEQUENCE [LARGE SCALE GENOMIC DNA]</scope>
</reference>
<reference key="7">
    <citation type="journal article" date="2004" name="Genome Res.">
        <title>The status, quality, and expansion of the NIH full-length cDNA project: the Mammalian Gene Collection (MGC).</title>
        <authorList>
            <consortium name="The MGC Project Team"/>
        </authorList>
    </citation>
    <scope>NUCLEOTIDE SEQUENCE [LARGE SCALE MRNA] (ISOFORM 1)</scope>
    <scope>VARIANT ALA-486</scope>
</reference>
<reference key="8">
    <citation type="journal article" date="2006" name="Hypertension">
        <title>Amelioration of genetic hypertension by suppression of renal G protein-coupled receptor kinase type 4 expression.</title>
        <authorList>
            <person name="Sanada H."/>
            <person name="Yatabe J."/>
            <person name="Midorikawa S."/>
            <person name="Katoh T."/>
            <person name="Hashimoto S."/>
            <person name="Watanabe T."/>
            <person name="Xu J."/>
            <person name="Luo Y."/>
            <person name="Wang X."/>
            <person name="Zeng C."/>
            <person name="Armando I."/>
            <person name="Felder R.A."/>
            <person name="Jose P.A."/>
        </authorList>
    </citation>
    <scope>TISSUE SPECIFICITY</scope>
</reference>
<reference key="9">
    <citation type="journal article" date="2009" name="J. Biol. Chem.">
        <title>G protein-coupled receptor kinase 4 (GRK4) regulates the phosphorylation and function of the dopamine D3 receptor.</title>
        <authorList>
            <person name="Villar V.A.M."/>
            <person name="Jones J.E."/>
            <person name="Armando I."/>
            <person name="Palmes-Saloma C."/>
            <person name="Yu P."/>
            <person name="Pascua A.M."/>
            <person name="Keever L."/>
            <person name="Arnaldo F.B."/>
            <person name="Wang Z."/>
            <person name="Luo Y."/>
            <person name="Felder R.A."/>
            <person name="Jose P.A."/>
        </authorList>
    </citation>
    <scope>FUNCTION</scope>
    <scope>ACTIVITY REGULATION</scope>
    <scope>SUBCELLULAR LOCATION</scope>
    <scope>INTERACTION WITH DRD3</scope>
</reference>
<reference key="10">
    <citation type="journal article" date="2012" name="Mol. Cell. Proteomics">
        <title>Comparative large-scale characterisation of plant vs. mammal proteins reveals similar and idiosyncratic N-alpha acetylation features.</title>
        <authorList>
            <person name="Bienvenut W.V."/>
            <person name="Sumpton D."/>
            <person name="Martinez A."/>
            <person name="Lilla S."/>
            <person name="Espagne C."/>
            <person name="Meinnel T."/>
            <person name="Giglione C."/>
        </authorList>
    </citation>
    <scope>ACETYLATION [LARGE SCALE ANALYSIS] AT MET-1</scope>
    <scope>IDENTIFICATION BY MASS SPECTROMETRY [LARGE SCALE ANALYSIS]</scope>
</reference>
<reference key="11">
    <citation type="journal article" date="2007" name="Nature">
        <title>Patterns of somatic mutation in human cancer genomes.</title>
        <authorList>
            <person name="Greenman C."/>
            <person name="Stephens P."/>
            <person name="Smith R."/>
            <person name="Dalgliesh G.L."/>
            <person name="Hunter C."/>
            <person name="Bignell G."/>
            <person name="Davies H."/>
            <person name="Teague J."/>
            <person name="Butler A."/>
            <person name="Stevens C."/>
            <person name="Edkins S."/>
            <person name="O'Meara S."/>
            <person name="Vastrik I."/>
            <person name="Schmidt E.E."/>
            <person name="Avis T."/>
            <person name="Barthorpe S."/>
            <person name="Bhamra G."/>
            <person name="Buck G."/>
            <person name="Choudhury B."/>
            <person name="Clements J."/>
            <person name="Cole J."/>
            <person name="Dicks E."/>
            <person name="Forbes S."/>
            <person name="Gray K."/>
            <person name="Halliday K."/>
            <person name="Harrison R."/>
            <person name="Hills K."/>
            <person name="Hinton J."/>
            <person name="Jenkinson A."/>
            <person name="Jones D."/>
            <person name="Menzies A."/>
            <person name="Mironenko T."/>
            <person name="Perry J."/>
            <person name="Raine K."/>
            <person name="Richardson D."/>
            <person name="Shepherd R."/>
            <person name="Small A."/>
            <person name="Tofts C."/>
            <person name="Varian J."/>
            <person name="Webb T."/>
            <person name="West S."/>
            <person name="Widaa S."/>
            <person name="Yates A."/>
            <person name="Cahill D.P."/>
            <person name="Louis D.N."/>
            <person name="Goldstraw P."/>
            <person name="Nicholson A.G."/>
            <person name="Brasseur F."/>
            <person name="Looijenga L."/>
            <person name="Weber B.L."/>
            <person name="Chiew Y.-E."/>
            <person name="DeFazio A."/>
            <person name="Greaves M.F."/>
            <person name="Green A.R."/>
            <person name="Campbell P."/>
            <person name="Birney E."/>
            <person name="Easton D.F."/>
            <person name="Chenevix-Trench G."/>
            <person name="Tan M.-H."/>
            <person name="Khoo S.K."/>
            <person name="Teh B.T."/>
            <person name="Yuen S.T."/>
            <person name="Leung S.Y."/>
            <person name="Wooster R."/>
            <person name="Futreal P.A."/>
            <person name="Stratton M.R."/>
        </authorList>
    </citation>
    <scope>VARIANTS [LARGE SCALE ANALYSIS] LEU-65; THR-116; VAL-142; ILE-247; GLN-383; PRO-425; ILE-473; ALA-486 AND THR-495</scope>
</reference>
<comment type="function">
    <text evidence="10 12">Specifically phosphorylates the activated forms of G protein-coupled receptors. GRK4-alpha can phosphorylate rhodopsin and its activity is inhibited by calmodulin; the other three isoforms do not phosphorylate rhodopsin and do not interact with calmodulin. GRK4-alpha and GRK4-gamma phosphorylate DRD3. Phosphorylates ADRB2.</text>
</comment>
<comment type="catalytic activity">
    <reaction>
        <text>[G-protein-coupled receptor] + ATP = [G-protein-coupled receptor]-phosphate + ADP + H(+)</text>
        <dbReference type="Rhea" id="RHEA:12008"/>
        <dbReference type="Rhea" id="RHEA-COMP:11260"/>
        <dbReference type="Rhea" id="RHEA-COMP:11261"/>
        <dbReference type="ChEBI" id="CHEBI:15378"/>
        <dbReference type="ChEBI" id="CHEBI:30616"/>
        <dbReference type="ChEBI" id="CHEBI:43176"/>
        <dbReference type="ChEBI" id="CHEBI:68546"/>
        <dbReference type="ChEBI" id="CHEBI:456216"/>
        <dbReference type="EC" id="2.7.11.16"/>
    </reaction>
</comment>
<comment type="activity regulation">
    <text evidence="10">Inhibited by heparin.</text>
</comment>
<comment type="subunit">
    <text evidence="10">Interacts with DRD3.</text>
</comment>
<comment type="interaction">
    <interactant intactId="EBI-5774453">
        <id>P32298</id>
    </interactant>
    <interactant intactId="EBI-722747">
        <id>P43250</id>
        <label>GRK6</label>
    </interactant>
    <organismsDiffer>false</organismsDiffer>
    <experiments>2</experiments>
</comment>
<comment type="subcellular location">
    <subcellularLocation>
        <location>Cytoplasm</location>
    </subcellularLocation>
    <subcellularLocation>
        <location>Cytoplasm</location>
        <location>Cell cortex</location>
    </subcellularLocation>
    <text>Both at the cell surface and dispersed in the cytoplasm under basal conditions. Receptor stimulation results in the internalization of GRK4 to the perinuclear area, where colocalization with DRD3 is observed strongly at 5 and 15 minutes. DRD3 and GRK4 colocalize in lipid rafts of renal proximal tubule cells.</text>
</comment>
<comment type="alternative products">
    <event type="alternative splicing"/>
    <isoform>
        <id>P32298-1</id>
        <name>1</name>
        <name>GRK4-alpha</name>
        <name>GRK4D</name>
        <sequence type="displayed"/>
    </isoform>
    <isoform>
        <id>P32298-2</id>
        <name>2</name>
        <name>GRK4-beta</name>
        <name>GRK4C</name>
        <sequence type="described" ref="VSP_004936"/>
    </isoform>
    <isoform>
        <id>P32298-3</id>
        <name>3</name>
        <name>GRK4-delta</name>
        <name>GRK4A</name>
        <sequence type="described" ref="VSP_004936 VSP_004937"/>
    </isoform>
    <isoform>
        <id>P32298-4</id>
        <name>4</name>
        <name>GRK4-gamma</name>
        <name>GRK4B</name>
        <sequence type="described" ref="VSP_004937"/>
    </isoform>
</comment>
<comment type="tissue specificity">
    <text evidence="8 12">Isoform 1, isoform 2, isoform 3, and isoform 4 are expressed in testis. Isoform 4 is expressed in myometrium.</text>
</comment>
<comment type="PTM">
    <text evidence="12">Palmitoylated.</text>
</comment>
<comment type="similarity">
    <text evidence="17">Belongs to the protein kinase superfamily. AGC Ser/Thr protein kinase family. GPRK subfamily.</text>
</comment>
<protein>
    <recommendedName>
        <fullName>G protein-coupled receptor kinase 4</fullName>
        <ecNumber>2.7.11.16</ecNumber>
    </recommendedName>
    <alternativeName>
        <fullName>G protein-coupled receptor kinase GRK4</fullName>
    </alternativeName>
    <alternativeName>
        <fullName>ITI1</fullName>
    </alternativeName>
</protein>
<dbReference type="EC" id="2.7.11.16"/>
<dbReference type="EMBL" id="L03718">
    <property type="protein sequence ID" value="AAB04045.1"/>
    <property type="molecule type" value="Genomic_DNA"/>
</dbReference>
<dbReference type="EMBL" id="X97879">
    <property type="protein sequence ID" value="CAA66468.1"/>
    <property type="molecule type" value="mRNA"/>
</dbReference>
<dbReference type="EMBL" id="X97880">
    <property type="protein sequence ID" value="CAA66469.1"/>
    <property type="molecule type" value="mRNA"/>
</dbReference>
<dbReference type="EMBL" id="X97881">
    <property type="protein sequence ID" value="CAA66470.1"/>
    <property type="molecule type" value="mRNA"/>
</dbReference>
<dbReference type="EMBL" id="U33054">
    <property type="protein sequence ID" value="AAC50406.1"/>
    <property type="molecule type" value="mRNA"/>
</dbReference>
<dbReference type="EMBL" id="U33055">
    <property type="protein sequence ID" value="AAC50407.1"/>
    <property type="molecule type" value="mRNA"/>
</dbReference>
<dbReference type="EMBL" id="U33056">
    <property type="protein sequence ID" value="AAC50408.1"/>
    <property type="molecule type" value="mRNA"/>
</dbReference>
<dbReference type="EMBL" id="U33168">
    <property type="protein sequence ID" value="AAC50409.1"/>
    <property type="molecule type" value="Genomic_DNA"/>
</dbReference>
<dbReference type="EMBL" id="U33153">
    <property type="protein sequence ID" value="AAC50409.1"/>
    <property type="status" value="JOINED"/>
    <property type="molecule type" value="Genomic_DNA"/>
</dbReference>
<dbReference type="EMBL" id="U33155">
    <property type="protein sequence ID" value="AAC50409.1"/>
    <property type="status" value="JOINED"/>
    <property type="molecule type" value="Genomic_DNA"/>
</dbReference>
<dbReference type="EMBL" id="U33156">
    <property type="protein sequence ID" value="AAC50409.1"/>
    <property type="status" value="JOINED"/>
    <property type="molecule type" value="Genomic_DNA"/>
</dbReference>
<dbReference type="EMBL" id="U33157">
    <property type="protein sequence ID" value="AAC50409.1"/>
    <property type="status" value="JOINED"/>
    <property type="molecule type" value="Genomic_DNA"/>
</dbReference>
<dbReference type="EMBL" id="U33158">
    <property type="protein sequence ID" value="AAC50409.1"/>
    <property type="status" value="JOINED"/>
    <property type="molecule type" value="Genomic_DNA"/>
</dbReference>
<dbReference type="EMBL" id="U33159">
    <property type="protein sequence ID" value="AAC50409.1"/>
    <property type="status" value="JOINED"/>
    <property type="molecule type" value="Genomic_DNA"/>
</dbReference>
<dbReference type="EMBL" id="U33160">
    <property type="protein sequence ID" value="AAC50409.1"/>
    <property type="status" value="JOINED"/>
    <property type="molecule type" value="Genomic_DNA"/>
</dbReference>
<dbReference type="EMBL" id="U33161">
    <property type="protein sequence ID" value="AAC50409.1"/>
    <property type="status" value="JOINED"/>
    <property type="molecule type" value="Genomic_DNA"/>
</dbReference>
<dbReference type="EMBL" id="U33162">
    <property type="protein sequence ID" value="AAC50409.1"/>
    <property type="status" value="JOINED"/>
    <property type="molecule type" value="Genomic_DNA"/>
</dbReference>
<dbReference type="EMBL" id="U33163">
    <property type="protein sequence ID" value="AAC50409.1"/>
    <property type="status" value="JOINED"/>
    <property type="molecule type" value="Genomic_DNA"/>
</dbReference>
<dbReference type="EMBL" id="U33164">
    <property type="protein sequence ID" value="AAC50409.1"/>
    <property type="status" value="JOINED"/>
    <property type="molecule type" value="Genomic_DNA"/>
</dbReference>
<dbReference type="EMBL" id="U33165">
    <property type="protein sequence ID" value="AAC50409.1"/>
    <property type="status" value="JOINED"/>
    <property type="molecule type" value="Genomic_DNA"/>
</dbReference>
<dbReference type="EMBL" id="U33166">
    <property type="protein sequence ID" value="AAC50409.1"/>
    <property type="status" value="JOINED"/>
    <property type="molecule type" value="Genomic_DNA"/>
</dbReference>
<dbReference type="EMBL" id="U33167">
    <property type="protein sequence ID" value="AAC50409.1"/>
    <property type="status" value="JOINED"/>
    <property type="molecule type" value="Genomic_DNA"/>
</dbReference>
<dbReference type="EMBL" id="U33168">
    <property type="protein sequence ID" value="AAC50410.1"/>
    <property type="molecule type" value="Genomic_DNA"/>
</dbReference>
<dbReference type="EMBL" id="U33153">
    <property type="protein sequence ID" value="AAC50410.1"/>
    <property type="status" value="JOINED"/>
    <property type="molecule type" value="Genomic_DNA"/>
</dbReference>
<dbReference type="EMBL" id="U33154">
    <property type="protein sequence ID" value="AAC50410.1"/>
    <property type="status" value="JOINED"/>
    <property type="molecule type" value="Genomic_DNA"/>
</dbReference>
<dbReference type="EMBL" id="U33155">
    <property type="protein sequence ID" value="AAC50410.1"/>
    <property type="status" value="JOINED"/>
    <property type="molecule type" value="Genomic_DNA"/>
</dbReference>
<dbReference type="EMBL" id="U33156">
    <property type="protein sequence ID" value="AAC50410.1"/>
    <property type="status" value="JOINED"/>
    <property type="molecule type" value="Genomic_DNA"/>
</dbReference>
<dbReference type="EMBL" id="U33157">
    <property type="protein sequence ID" value="AAC50410.1"/>
    <property type="status" value="JOINED"/>
    <property type="molecule type" value="Genomic_DNA"/>
</dbReference>
<dbReference type="EMBL" id="U33158">
    <property type="protein sequence ID" value="AAC50410.1"/>
    <property type="status" value="JOINED"/>
    <property type="molecule type" value="Genomic_DNA"/>
</dbReference>
<dbReference type="EMBL" id="U33159">
    <property type="protein sequence ID" value="AAC50410.1"/>
    <property type="status" value="JOINED"/>
    <property type="molecule type" value="Genomic_DNA"/>
</dbReference>
<dbReference type="EMBL" id="U33160">
    <property type="protein sequence ID" value="AAC50410.1"/>
    <property type="status" value="JOINED"/>
    <property type="molecule type" value="Genomic_DNA"/>
</dbReference>
<dbReference type="EMBL" id="U33161">
    <property type="protein sequence ID" value="AAC50410.1"/>
    <property type="status" value="JOINED"/>
    <property type="molecule type" value="Genomic_DNA"/>
</dbReference>
<dbReference type="EMBL" id="U33162">
    <property type="protein sequence ID" value="AAC50410.1"/>
    <property type="status" value="JOINED"/>
    <property type="molecule type" value="Genomic_DNA"/>
</dbReference>
<dbReference type="EMBL" id="U33163">
    <property type="protein sequence ID" value="AAC50410.1"/>
    <property type="status" value="JOINED"/>
    <property type="molecule type" value="Genomic_DNA"/>
</dbReference>
<dbReference type="EMBL" id="U33164">
    <property type="protein sequence ID" value="AAC50410.1"/>
    <property type="status" value="JOINED"/>
    <property type="molecule type" value="Genomic_DNA"/>
</dbReference>
<dbReference type="EMBL" id="U33165">
    <property type="protein sequence ID" value="AAC50410.1"/>
    <property type="status" value="JOINED"/>
    <property type="molecule type" value="Genomic_DNA"/>
</dbReference>
<dbReference type="EMBL" id="U33166">
    <property type="protein sequence ID" value="AAC50410.1"/>
    <property type="status" value="JOINED"/>
    <property type="molecule type" value="Genomic_DNA"/>
</dbReference>
<dbReference type="EMBL" id="U33167">
    <property type="protein sequence ID" value="AAC50410.1"/>
    <property type="status" value="JOINED"/>
    <property type="molecule type" value="Genomic_DNA"/>
</dbReference>
<dbReference type="EMBL" id="U33168">
    <property type="protein sequence ID" value="AAC50411.1"/>
    <property type="molecule type" value="Genomic_DNA"/>
</dbReference>
<dbReference type="EMBL" id="U33153">
    <property type="protein sequence ID" value="AAC50411.1"/>
    <property type="status" value="JOINED"/>
    <property type="molecule type" value="Genomic_DNA"/>
</dbReference>
<dbReference type="EMBL" id="U33154">
    <property type="protein sequence ID" value="AAC50411.1"/>
    <property type="status" value="JOINED"/>
    <property type="molecule type" value="Genomic_DNA"/>
</dbReference>
<dbReference type="EMBL" id="U33155">
    <property type="protein sequence ID" value="AAC50411.1"/>
    <property type="status" value="JOINED"/>
    <property type="molecule type" value="Genomic_DNA"/>
</dbReference>
<dbReference type="EMBL" id="U33156">
    <property type="protein sequence ID" value="AAC50411.1"/>
    <property type="status" value="JOINED"/>
    <property type="molecule type" value="Genomic_DNA"/>
</dbReference>
<dbReference type="EMBL" id="U33157">
    <property type="protein sequence ID" value="AAC50411.1"/>
    <property type="status" value="JOINED"/>
    <property type="molecule type" value="Genomic_DNA"/>
</dbReference>
<dbReference type="EMBL" id="U33158">
    <property type="protein sequence ID" value="AAC50411.1"/>
    <property type="status" value="JOINED"/>
    <property type="molecule type" value="Genomic_DNA"/>
</dbReference>
<dbReference type="EMBL" id="U33159">
    <property type="protein sequence ID" value="AAC50411.1"/>
    <property type="status" value="JOINED"/>
    <property type="molecule type" value="Genomic_DNA"/>
</dbReference>
<dbReference type="EMBL" id="U33160">
    <property type="protein sequence ID" value="AAC50411.1"/>
    <property type="status" value="JOINED"/>
    <property type="molecule type" value="Genomic_DNA"/>
</dbReference>
<dbReference type="EMBL" id="U33161">
    <property type="protein sequence ID" value="AAC50411.1"/>
    <property type="status" value="JOINED"/>
    <property type="molecule type" value="Genomic_DNA"/>
</dbReference>
<dbReference type="EMBL" id="U33162">
    <property type="protein sequence ID" value="AAC50411.1"/>
    <property type="status" value="JOINED"/>
    <property type="molecule type" value="Genomic_DNA"/>
</dbReference>
<dbReference type="EMBL" id="U33163">
    <property type="protein sequence ID" value="AAC50411.1"/>
    <property type="status" value="JOINED"/>
    <property type="molecule type" value="Genomic_DNA"/>
</dbReference>
<dbReference type="EMBL" id="U33164">
    <property type="protein sequence ID" value="AAC50411.1"/>
    <property type="status" value="JOINED"/>
    <property type="molecule type" value="Genomic_DNA"/>
</dbReference>
<dbReference type="EMBL" id="U33165">
    <property type="protein sequence ID" value="AAC50411.1"/>
    <property type="status" value="JOINED"/>
    <property type="molecule type" value="Genomic_DNA"/>
</dbReference>
<dbReference type="EMBL" id="U33166">
    <property type="protein sequence ID" value="AAC50411.1"/>
    <property type="status" value="JOINED"/>
    <property type="molecule type" value="Genomic_DNA"/>
</dbReference>
<dbReference type="EMBL" id="U33168">
    <property type="protein sequence ID" value="AAC50412.1"/>
    <property type="molecule type" value="Genomic_DNA"/>
</dbReference>
<dbReference type="EMBL" id="U33153">
    <property type="protein sequence ID" value="AAC50412.1"/>
    <property type="status" value="JOINED"/>
    <property type="molecule type" value="Genomic_DNA"/>
</dbReference>
<dbReference type="EMBL" id="U33155">
    <property type="protein sequence ID" value="AAC50412.1"/>
    <property type="status" value="JOINED"/>
    <property type="molecule type" value="Genomic_DNA"/>
</dbReference>
<dbReference type="EMBL" id="U33156">
    <property type="protein sequence ID" value="AAC50412.1"/>
    <property type="status" value="JOINED"/>
    <property type="molecule type" value="Genomic_DNA"/>
</dbReference>
<dbReference type="EMBL" id="U33157">
    <property type="protein sequence ID" value="AAC50412.1"/>
    <property type="status" value="JOINED"/>
    <property type="molecule type" value="Genomic_DNA"/>
</dbReference>
<dbReference type="EMBL" id="U33158">
    <property type="protein sequence ID" value="AAC50412.1"/>
    <property type="status" value="JOINED"/>
    <property type="molecule type" value="Genomic_DNA"/>
</dbReference>
<dbReference type="EMBL" id="U33159">
    <property type="protein sequence ID" value="AAC50412.1"/>
    <property type="status" value="JOINED"/>
    <property type="molecule type" value="Genomic_DNA"/>
</dbReference>
<dbReference type="EMBL" id="U33160">
    <property type="protein sequence ID" value="AAC50412.1"/>
    <property type="status" value="JOINED"/>
    <property type="molecule type" value="Genomic_DNA"/>
</dbReference>
<dbReference type="EMBL" id="U33161">
    <property type="protein sequence ID" value="AAC50412.1"/>
    <property type="status" value="JOINED"/>
    <property type="molecule type" value="Genomic_DNA"/>
</dbReference>
<dbReference type="EMBL" id="U33162">
    <property type="protein sequence ID" value="AAC50412.1"/>
    <property type="status" value="JOINED"/>
    <property type="molecule type" value="Genomic_DNA"/>
</dbReference>
<dbReference type="EMBL" id="U33163">
    <property type="protein sequence ID" value="AAC50412.1"/>
    <property type="status" value="JOINED"/>
    <property type="molecule type" value="Genomic_DNA"/>
</dbReference>
<dbReference type="EMBL" id="U33164">
    <property type="protein sequence ID" value="AAC50412.1"/>
    <property type="status" value="JOINED"/>
    <property type="molecule type" value="Genomic_DNA"/>
</dbReference>
<dbReference type="EMBL" id="U33165">
    <property type="protein sequence ID" value="AAC50412.1"/>
    <property type="status" value="JOINED"/>
    <property type="molecule type" value="Genomic_DNA"/>
</dbReference>
<dbReference type="EMBL" id="U33166">
    <property type="protein sequence ID" value="AAC50412.1"/>
    <property type="status" value="JOINED"/>
    <property type="molecule type" value="Genomic_DNA"/>
</dbReference>
<dbReference type="EMBL" id="AK223581">
    <property type="protein sequence ID" value="BAD97301.1"/>
    <property type="molecule type" value="mRNA"/>
</dbReference>
<dbReference type="EMBL" id="X98118">
    <property type="protein sequence ID" value="CAA66802.1"/>
    <property type="molecule type" value="mRNA"/>
</dbReference>
<dbReference type="EMBL" id="X75897">
    <property type="protein sequence ID" value="CAA53506.1"/>
    <property type="molecule type" value="mRNA"/>
</dbReference>
<dbReference type="EMBL" id="Z68192">
    <property type="protein sequence ID" value="CAA92341.1"/>
    <property type="molecule type" value="Genomic_DNA"/>
</dbReference>
<dbReference type="EMBL" id="BC117320">
    <property type="protein sequence ID" value="AAI17321.1"/>
    <property type="molecule type" value="mRNA"/>
</dbReference>
<dbReference type="CCDS" id="CCDS33946.1">
    <molecule id="P32298-1"/>
</dbReference>
<dbReference type="CCDS" id="CCDS33947.1">
    <molecule id="P32298-4"/>
</dbReference>
<dbReference type="CCDS" id="CCDS47002.1">
    <molecule id="P32298-2"/>
</dbReference>
<dbReference type="CCDS" id="CCDS68656.1">
    <molecule id="P32298-3"/>
</dbReference>
<dbReference type="PIR" id="I54326">
    <property type="entry name" value="I54326"/>
</dbReference>
<dbReference type="PIR" id="JC2127">
    <property type="entry name" value="JC2127"/>
</dbReference>
<dbReference type="RefSeq" id="NP_001004056.1">
    <molecule id="P32298-2"/>
    <property type="nucleotide sequence ID" value="NM_001004056.2"/>
</dbReference>
<dbReference type="RefSeq" id="NP_001004057.1">
    <molecule id="P32298-4"/>
    <property type="nucleotide sequence ID" value="NM_001004057.2"/>
</dbReference>
<dbReference type="RefSeq" id="NP_005298.2">
    <molecule id="P32298-3"/>
    <property type="nucleotide sequence ID" value="NM_005307.3"/>
</dbReference>
<dbReference type="RefSeq" id="NP_892027.2">
    <molecule id="P32298-1"/>
    <property type="nucleotide sequence ID" value="NM_182982.3"/>
</dbReference>
<dbReference type="PDB" id="4YHJ">
    <property type="method" value="X-ray"/>
    <property type="resolution" value="2.60 A"/>
    <property type="chains" value="A/B=1-578"/>
</dbReference>
<dbReference type="PDBsum" id="4YHJ"/>
<dbReference type="SMR" id="P32298"/>
<dbReference type="BioGRID" id="109126">
    <property type="interactions" value="29"/>
</dbReference>
<dbReference type="FunCoup" id="P32298">
    <property type="interactions" value="1695"/>
</dbReference>
<dbReference type="IntAct" id="P32298">
    <property type="interactions" value="24"/>
</dbReference>
<dbReference type="STRING" id="9606.ENSP00000381129"/>
<dbReference type="BindingDB" id="P32298"/>
<dbReference type="ChEMBL" id="CHEMBL5861"/>
<dbReference type="DrugCentral" id="P32298"/>
<dbReference type="GuidetoPHARMACOLOGY" id="1468"/>
<dbReference type="iPTMnet" id="P32298"/>
<dbReference type="PhosphoSitePlus" id="P32298"/>
<dbReference type="BioMuta" id="GRK4"/>
<dbReference type="DMDM" id="143811400"/>
<dbReference type="jPOST" id="P32298"/>
<dbReference type="MassIVE" id="P32298"/>
<dbReference type="PaxDb" id="9606-ENSP00000381129"/>
<dbReference type="PeptideAtlas" id="P32298"/>
<dbReference type="ProteomicsDB" id="54861">
    <molecule id="P32298-1"/>
</dbReference>
<dbReference type="ProteomicsDB" id="54862">
    <molecule id="P32298-2"/>
</dbReference>
<dbReference type="ProteomicsDB" id="54863">
    <molecule id="P32298-3"/>
</dbReference>
<dbReference type="ProteomicsDB" id="54864">
    <molecule id="P32298-4"/>
</dbReference>
<dbReference type="Antibodypedia" id="3832">
    <property type="antibodies" value="272 antibodies from 29 providers"/>
</dbReference>
<dbReference type="DNASU" id="2868"/>
<dbReference type="Ensembl" id="ENST00000345167.10">
    <molecule id="P32298-2"/>
    <property type="protein sequence ID" value="ENSP00000264764.8"/>
    <property type="gene ID" value="ENSG00000125388.20"/>
</dbReference>
<dbReference type="Ensembl" id="ENST00000398051.8">
    <molecule id="P32298-3"/>
    <property type="protein sequence ID" value="ENSP00000381128.4"/>
    <property type="gene ID" value="ENSG00000125388.20"/>
</dbReference>
<dbReference type="Ensembl" id="ENST00000398052.9">
    <molecule id="P32298-1"/>
    <property type="protein sequence ID" value="ENSP00000381129.4"/>
    <property type="gene ID" value="ENSG00000125388.20"/>
</dbReference>
<dbReference type="Ensembl" id="ENST00000504933.1">
    <molecule id="P32298-4"/>
    <property type="protein sequence ID" value="ENSP00000427445.1"/>
    <property type="gene ID" value="ENSG00000125388.20"/>
</dbReference>
<dbReference type="GeneID" id="2868"/>
<dbReference type="KEGG" id="hsa:2868"/>
<dbReference type="MANE-Select" id="ENST00000398052.9">
    <property type="protein sequence ID" value="ENSP00000381129.4"/>
    <property type="RefSeq nucleotide sequence ID" value="NM_182982.3"/>
    <property type="RefSeq protein sequence ID" value="NP_892027.2"/>
</dbReference>
<dbReference type="UCSC" id="uc003ggn.2">
    <molecule id="P32298-1"/>
    <property type="organism name" value="human"/>
</dbReference>
<dbReference type="AGR" id="HGNC:4543"/>
<dbReference type="CTD" id="2868"/>
<dbReference type="DisGeNET" id="2868"/>
<dbReference type="GeneCards" id="GRK4"/>
<dbReference type="HGNC" id="HGNC:4543">
    <property type="gene designation" value="GRK4"/>
</dbReference>
<dbReference type="HPA" id="ENSG00000125388">
    <property type="expression patterns" value="Tissue enhanced (testis)"/>
</dbReference>
<dbReference type="MIM" id="137026">
    <property type="type" value="gene"/>
</dbReference>
<dbReference type="neXtProt" id="NX_P32298"/>
<dbReference type="OpenTargets" id="ENSG00000125388"/>
<dbReference type="PharmGKB" id="PA28941"/>
<dbReference type="VEuPathDB" id="HostDB:ENSG00000125388"/>
<dbReference type="eggNOG" id="KOG0986">
    <property type="taxonomic scope" value="Eukaryota"/>
</dbReference>
<dbReference type="GeneTree" id="ENSGT00940000160151"/>
<dbReference type="HOGENOM" id="CLU_000288_63_41_1"/>
<dbReference type="InParanoid" id="P32298"/>
<dbReference type="OMA" id="PFRPDPN"/>
<dbReference type="OrthoDB" id="354826at2759"/>
<dbReference type="PAN-GO" id="P32298">
    <property type="GO annotations" value="4 GO annotations based on evolutionary models"/>
</dbReference>
<dbReference type="PhylomeDB" id="P32298"/>
<dbReference type="TreeFam" id="TF313940"/>
<dbReference type="BRENDA" id="2.7.11.16">
    <property type="organism ID" value="2681"/>
</dbReference>
<dbReference type="PathwayCommons" id="P32298"/>
<dbReference type="Reactome" id="R-HSA-2514859">
    <molecule id="P32298-1"/>
    <property type="pathway name" value="Inactivation, recovery and regulation of the phototransduction cascade"/>
</dbReference>
<dbReference type="SignaLink" id="P32298"/>
<dbReference type="SIGNOR" id="P32298"/>
<dbReference type="BioGRID-ORCS" id="2868">
    <property type="hits" value="7 hits in 1173 CRISPR screens"/>
</dbReference>
<dbReference type="ChiTaRS" id="GRK4">
    <property type="organism name" value="human"/>
</dbReference>
<dbReference type="EvolutionaryTrace" id="P32298"/>
<dbReference type="GeneWiki" id="GRK4"/>
<dbReference type="GenomeRNAi" id="2868"/>
<dbReference type="Pharos" id="P32298">
    <property type="development level" value="Tchem"/>
</dbReference>
<dbReference type="PRO" id="PR:P32298"/>
<dbReference type="Proteomes" id="UP000005640">
    <property type="component" value="Chromosome 4"/>
</dbReference>
<dbReference type="RNAct" id="P32298">
    <property type="molecule type" value="protein"/>
</dbReference>
<dbReference type="Bgee" id="ENSG00000125388">
    <property type="expression patterns" value="Expressed in left testis and 112 other cell types or tissues"/>
</dbReference>
<dbReference type="ExpressionAtlas" id="P32298">
    <property type="expression patterns" value="baseline and differential"/>
</dbReference>
<dbReference type="GO" id="GO:0005938">
    <property type="term" value="C:cell cortex"/>
    <property type="evidence" value="ECO:0007669"/>
    <property type="project" value="UniProtKB-SubCell"/>
</dbReference>
<dbReference type="GO" id="GO:0005737">
    <property type="term" value="C:cytoplasm"/>
    <property type="evidence" value="ECO:0000318"/>
    <property type="project" value="GO_Central"/>
</dbReference>
<dbReference type="GO" id="GO:0005829">
    <property type="term" value="C:cytosol"/>
    <property type="evidence" value="ECO:0000314"/>
    <property type="project" value="HPA"/>
</dbReference>
<dbReference type="GO" id="GO:0097381">
    <property type="term" value="C:photoreceptor disc membrane"/>
    <property type="evidence" value="ECO:0000304"/>
    <property type="project" value="Reactome"/>
</dbReference>
<dbReference type="GO" id="GO:0005886">
    <property type="term" value="C:plasma membrane"/>
    <property type="evidence" value="ECO:0000314"/>
    <property type="project" value="HPA"/>
</dbReference>
<dbReference type="GO" id="GO:0005524">
    <property type="term" value="F:ATP binding"/>
    <property type="evidence" value="ECO:0007669"/>
    <property type="project" value="UniProtKB-KW"/>
</dbReference>
<dbReference type="GO" id="GO:0004672">
    <property type="term" value="F:protein kinase activity"/>
    <property type="evidence" value="ECO:0000318"/>
    <property type="project" value="GO_Central"/>
</dbReference>
<dbReference type="GO" id="GO:0050254">
    <property type="term" value="F:rhodopsin kinase activity"/>
    <property type="evidence" value="ECO:0000304"/>
    <property type="project" value="Reactome"/>
</dbReference>
<dbReference type="GO" id="GO:0031623">
    <property type="term" value="P:receptor internalization"/>
    <property type="evidence" value="ECO:0000314"/>
    <property type="project" value="UniProtKB"/>
</dbReference>
<dbReference type="GO" id="GO:0008277">
    <property type="term" value="P:regulation of G protein-coupled receptor signaling pathway"/>
    <property type="evidence" value="ECO:0000304"/>
    <property type="project" value="ProtInc"/>
</dbReference>
<dbReference type="GO" id="GO:0022400">
    <property type="term" value="P:regulation of opsin-mediated signaling pathway"/>
    <property type="evidence" value="ECO:0000304"/>
    <property type="project" value="Reactome"/>
</dbReference>
<dbReference type="GO" id="GO:0009966">
    <property type="term" value="P:regulation of signal transduction"/>
    <property type="evidence" value="ECO:0000318"/>
    <property type="project" value="GO_Central"/>
</dbReference>
<dbReference type="GO" id="GO:0007165">
    <property type="term" value="P:signal transduction"/>
    <property type="evidence" value="ECO:0007669"/>
    <property type="project" value="InterPro"/>
</dbReference>
<dbReference type="CDD" id="cd05631">
    <property type="entry name" value="STKc_GRK4"/>
    <property type="match status" value="1"/>
</dbReference>
<dbReference type="FunFam" id="1.10.167.10:FF:000009">
    <property type="entry name" value="G protein-coupled receptor kinase"/>
    <property type="match status" value="1"/>
</dbReference>
<dbReference type="FunFam" id="1.10.510.10:FF:000074">
    <property type="entry name" value="G protein-coupled receptor kinase"/>
    <property type="match status" value="1"/>
</dbReference>
<dbReference type="Gene3D" id="3.30.200.20">
    <property type="entry name" value="Phosphorylase Kinase, domain 1"/>
    <property type="match status" value="1"/>
</dbReference>
<dbReference type="Gene3D" id="1.10.167.10">
    <property type="entry name" value="Regulator of G-protein Signalling 4, domain 2"/>
    <property type="match status" value="1"/>
</dbReference>
<dbReference type="Gene3D" id="1.10.510.10">
    <property type="entry name" value="Transferase(Phosphotransferase) domain 1"/>
    <property type="match status" value="1"/>
</dbReference>
<dbReference type="InterPro" id="IPR000961">
    <property type="entry name" value="AGC-kinase_C"/>
</dbReference>
<dbReference type="InterPro" id="IPR000239">
    <property type="entry name" value="GPCR_kinase"/>
</dbReference>
<dbReference type="InterPro" id="IPR011009">
    <property type="entry name" value="Kinase-like_dom_sf"/>
</dbReference>
<dbReference type="InterPro" id="IPR000719">
    <property type="entry name" value="Prot_kinase_dom"/>
</dbReference>
<dbReference type="InterPro" id="IPR017441">
    <property type="entry name" value="Protein_kinase_ATP_BS"/>
</dbReference>
<dbReference type="InterPro" id="IPR016137">
    <property type="entry name" value="RGS"/>
</dbReference>
<dbReference type="InterPro" id="IPR036305">
    <property type="entry name" value="RGS_sf"/>
</dbReference>
<dbReference type="InterPro" id="IPR044926">
    <property type="entry name" value="RGS_subdomain_2"/>
</dbReference>
<dbReference type="InterPro" id="IPR008271">
    <property type="entry name" value="Ser/Thr_kinase_AS"/>
</dbReference>
<dbReference type="PANTHER" id="PTHR24355:SF14">
    <property type="entry name" value="G PROTEIN-COUPLED RECEPTOR KINASE 4"/>
    <property type="match status" value="1"/>
</dbReference>
<dbReference type="PANTHER" id="PTHR24355">
    <property type="entry name" value="G PROTEIN-COUPLED RECEPTOR KINASE/RIBOSOMAL PROTEIN S6 KINASE"/>
    <property type="match status" value="1"/>
</dbReference>
<dbReference type="Pfam" id="PF00069">
    <property type="entry name" value="Pkinase"/>
    <property type="match status" value="1"/>
</dbReference>
<dbReference type="Pfam" id="PF00615">
    <property type="entry name" value="RGS"/>
    <property type="match status" value="1"/>
</dbReference>
<dbReference type="PRINTS" id="PR00717">
    <property type="entry name" value="GPCRKINASE"/>
</dbReference>
<dbReference type="SMART" id="SM00315">
    <property type="entry name" value="RGS"/>
    <property type="match status" value="1"/>
</dbReference>
<dbReference type="SMART" id="SM00133">
    <property type="entry name" value="S_TK_X"/>
    <property type="match status" value="1"/>
</dbReference>
<dbReference type="SMART" id="SM00220">
    <property type="entry name" value="S_TKc"/>
    <property type="match status" value="1"/>
</dbReference>
<dbReference type="SUPFAM" id="SSF56112">
    <property type="entry name" value="Protein kinase-like (PK-like)"/>
    <property type="match status" value="1"/>
</dbReference>
<dbReference type="SUPFAM" id="SSF48097">
    <property type="entry name" value="Regulator of G-protein signaling, RGS"/>
    <property type="match status" value="1"/>
</dbReference>
<dbReference type="PROSITE" id="PS51285">
    <property type="entry name" value="AGC_KINASE_CTER"/>
    <property type="match status" value="1"/>
</dbReference>
<dbReference type="PROSITE" id="PS00107">
    <property type="entry name" value="PROTEIN_KINASE_ATP"/>
    <property type="match status" value="1"/>
</dbReference>
<dbReference type="PROSITE" id="PS50011">
    <property type="entry name" value="PROTEIN_KINASE_DOM"/>
    <property type="match status" value="1"/>
</dbReference>
<dbReference type="PROSITE" id="PS00108">
    <property type="entry name" value="PROTEIN_KINASE_ST"/>
    <property type="match status" value="1"/>
</dbReference>
<dbReference type="PROSITE" id="PS50132">
    <property type="entry name" value="RGS"/>
    <property type="match status" value="1"/>
</dbReference>
<keyword id="KW-0002">3D-structure</keyword>
<keyword id="KW-0007">Acetylation</keyword>
<keyword id="KW-0025">Alternative splicing</keyword>
<keyword id="KW-0067">ATP-binding</keyword>
<keyword id="KW-0963">Cytoplasm</keyword>
<keyword id="KW-0418">Kinase</keyword>
<keyword id="KW-0449">Lipoprotein</keyword>
<keyword id="KW-0547">Nucleotide-binding</keyword>
<keyword id="KW-0564">Palmitate</keyword>
<keyword id="KW-0597">Phosphoprotein</keyword>
<keyword id="KW-1267">Proteomics identification</keyword>
<keyword id="KW-1185">Reference proteome</keyword>
<keyword id="KW-0723">Serine/threonine-protein kinase</keyword>
<keyword id="KW-0808">Transferase</keyword>
<feature type="chain" id="PRO_0000085967" description="G protein-coupled receptor kinase 4">
    <location>
        <begin position="1"/>
        <end position="578"/>
    </location>
</feature>
<feature type="domain" description="RGS" evidence="3">
    <location>
        <begin position="52"/>
        <end position="172"/>
    </location>
</feature>
<feature type="domain" description="Protein kinase" evidence="2">
    <location>
        <begin position="187"/>
        <end position="449"/>
    </location>
</feature>
<feature type="domain" description="AGC-kinase C-terminal" evidence="4">
    <location>
        <begin position="450"/>
        <end position="515"/>
    </location>
</feature>
<feature type="region of interest" description="N-terminal">
    <location>
        <begin position="1"/>
        <end position="154"/>
    </location>
</feature>
<feature type="active site" description="Proton acceptor" evidence="2 5">
    <location>
        <position position="312"/>
    </location>
</feature>
<feature type="binding site" evidence="2">
    <location>
        <begin position="193"/>
        <end position="201"/>
    </location>
    <ligand>
        <name>ATP</name>
        <dbReference type="ChEBI" id="CHEBI:30616"/>
    </ligand>
</feature>
<feature type="binding site" evidence="2">
    <location>
        <position position="216"/>
    </location>
    <ligand>
        <name>ATP</name>
        <dbReference type="ChEBI" id="CHEBI:30616"/>
    </ligand>
</feature>
<feature type="modified residue" description="N-acetylmethionine" evidence="18">
    <location>
        <position position="1"/>
    </location>
</feature>
<feature type="modified residue" description="Phosphoserine" evidence="1">
    <location>
        <position position="485"/>
    </location>
</feature>
<feature type="splice variant" id="VSP_004936" description="In isoform 2 and isoform 3." evidence="14 15 16">
    <location>
        <begin position="18"/>
        <end position="49"/>
    </location>
</feature>
<feature type="splice variant" id="VSP_004937" description="In isoform 3 and isoform 4." evidence="15 16">
    <location>
        <begin position="516"/>
        <end position="561"/>
    </location>
</feature>
<feature type="sequence variant" id="VAR_024573" description="In dbSNP:rs2960306." evidence="9">
    <original>R</original>
    <variation>L</variation>
    <location>
        <position position="65"/>
    </location>
</feature>
<feature type="sequence variant" id="VAR_051621" description="In dbSNP:rs13305979.">
    <original>D</original>
    <variation>H</variation>
    <location>
        <position position="95"/>
    </location>
</feature>
<feature type="sequence variant" id="VAR_046043" description="In dbSNP:rs34857805." evidence="9">
    <original>A</original>
    <variation>T</variation>
    <location>
        <position position="116"/>
    </location>
</feature>
<feature type="sequence variant" id="VAR_024574" description="In dbSNP:rs1024323." evidence="9">
    <original>A</original>
    <variation>V</variation>
    <location>
        <position position="142"/>
    </location>
</feature>
<feature type="sequence variant" id="VAR_051622" description="In dbSNP:rs45538934.">
    <original>T</original>
    <variation>R</variation>
    <location>
        <position position="183"/>
    </location>
</feature>
<feature type="sequence variant" id="VAR_007806" description="In dbSNP:rs1140085." evidence="9">
    <original>V</original>
    <variation>I</variation>
    <location>
        <position position="247"/>
    </location>
</feature>
<feature type="sequence variant" id="VAR_046044" description="In dbSNP:rs55852353." evidence="9">
    <original>H</original>
    <variation>Q</variation>
    <location>
        <position position="383"/>
    </location>
</feature>
<feature type="sequence variant" id="VAR_040516" evidence="9">
    <original>L</original>
    <variation>P</variation>
    <location>
        <position position="425"/>
    </location>
</feature>
<feature type="sequence variant" id="VAR_051623" description="In dbSNP:rs747003103.">
    <original>A</original>
    <variation>V</variation>
    <location>
        <position position="440"/>
    </location>
</feature>
<feature type="sequence variant" id="VAR_046045" description="In dbSNP:rs35024854." evidence="9">
    <original>V</original>
    <variation>I</variation>
    <location>
        <position position="473"/>
    </location>
</feature>
<feature type="sequence variant" id="VAR_024575" description="In dbSNP:rs1801058." evidence="6 7 9 11 12 13">
    <original>V</original>
    <variation>A</variation>
    <location>
        <position position="486"/>
    </location>
</feature>
<feature type="sequence variant" id="VAR_046046" description="In dbSNP:rs35463176." evidence="9">
    <original>A</original>
    <variation>T</variation>
    <location>
        <position position="495"/>
    </location>
</feature>
<feature type="sequence conflict" description="In Ref. 1; CAA66468/CAA66802." evidence="17" ref="1">
    <original>G</original>
    <variation>D</variation>
    <location>
        <position position="562"/>
    </location>
</feature>
<feature type="helix" evidence="19">
    <location>
        <begin position="30"/>
        <end position="33"/>
    </location>
</feature>
<feature type="turn" evidence="19">
    <location>
        <begin position="39"/>
        <end position="42"/>
    </location>
</feature>
<feature type="helix" evidence="19">
    <location>
        <begin position="43"/>
        <end position="48"/>
    </location>
</feature>
<feature type="helix" evidence="19">
    <location>
        <begin position="53"/>
        <end position="57"/>
    </location>
</feature>
<feature type="helix" evidence="19">
    <location>
        <begin position="61"/>
        <end position="71"/>
    </location>
</feature>
<feature type="helix" evidence="19">
    <location>
        <begin position="75"/>
        <end position="91"/>
    </location>
</feature>
<feature type="turn" evidence="19">
    <location>
        <begin position="95"/>
        <end position="97"/>
    </location>
</feature>
<feature type="helix" evidence="19">
    <location>
        <begin position="98"/>
        <end position="109"/>
    </location>
</feature>
<feature type="strand" evidence="19">
    <location>
        <begin position="113"/>
        <end position="115"/>
    </location>
</feature>
<feature type="helix" evidence="19">
    <location>
        <begin position="123"/>
        <end position="132"/>
    </location>
</feature>
<feature type="strand" evidence="19">
    <location>
        <begin position="135"/>
        <end position="137"/>
    </location>
</feature>
<feature type="turn" evidence="19">
    <location>
        <begin position="140"/>
        <end position="143"/>
    </location>
</feature>
<feature type="helix" evidence="19">
    <location>
        <begin position="144"/>
        <end position="154"/>
    </location>
</feature>
<feature type="helix" evidence="19">
    <location>
        <begin position="157"/>
        <end position="162"/>
    </location>
</feature>
<feature type="helix" evidence="19">
    <location>
        <begin position="166"/>
        <end position="178"/>
    </location>
</feature>
<feature type="helix" evidence="19">
    <location>
        <begin position="184"/>
        <end position="186"/>
    </location>
</feature>
<feature type="strand" evidence="19">
    <location>
        <begin position="187"/>
        <end position="195"/>
    </location>
</feature>
<feature type="strand" evidence="19">
    <location>
        <begin position="197"/>
        <end position="206"/>
    </location>
</feature>
<feature type="turn" evidence="19">
    <location>
        <begin position="207"/>
        <end position="209"/>
    </location>
</feature>
<feature type="strand" evidence="19">
    <location>
        <begin position="212"/>
        <end position="219"/>
    </location>
</feature>
<feature type="helix" evidence="19">
    <location>
        <begin position="220"/>
        <end position="226"/>
    </location>
</feature>
<feature type="helix" evidence="19">
    <location>
        <begin position="229"/>
        <end position="241"/>
    </location>
</feature>
<feature type="strand" evidence="19">
    <location>
        <begin position="250"/>
        <end position="255"/>
    </location>
</feature>
<feature type="strand" evidence="19">
    <location>
        <begin position="257"/>
        <end position="264"/>
    </location>
</feature>
<feature type="helix" evidence="19">
    <location>
        <begin position="272"/>
        <end position="276"/>
    </location>
</feature>
<feature type="turn" evidence="19">
    <location>
        <begin position="277"/>
        <end position="279"/>
    </location>
</feature>
<feature type="strand" evidence="19">
    <location>
        <begin position="280"/>
        <end position="283"/>
    </location>
</feature>
<feature type="helix" evidence="19">
    <location>
        <begin position="286"/>
        <end position="304"/>
    </location>
</feature>
<feature type="turn" evidence="19">
    <location>
        <begin position="305"/>
        <end position="307"/>
    </location>
</feature>
<feature type="helix" evidence="19">
    <location>
        <begin position="315"/>
        <end position="317"/>
    </location>
</feature>
<feature type="strand" evidence="19">
    <location>
        <begin position="318"/>
        <end position="320"/>
    </location>
</feature>
<feature type="strand" evidence="19">
    <location>
        <begin position="326"/>
        <end position="328"/>
    </location>
</feature>
<feature type="strand" evidence="19">
    <location>
        <begin position="341"/>
        <end position="343"/>
    </location>
</feature>
<feature type="turn" evidence="19">
    <location>
        <begin position="350"/>
        <end position="352"/>
    </location>
</feature>
<feature type="helix" evidence="19">
    <location>
        <begin position="355"/>
        <end position="358"/>
    </location>
</feature>
<feature type="strand" evidence="19">
    <location>
        <begin position="363"/>
        <end position="365"/>
    </location>
</feature>
<feature type="helix" evidence="19">
    <location>
        <begin position="366"/>
        <end position="381"/>
    </location>
</feature>
<feature type="strand" evidence="19">
    <location>
        <begin position="382"/>
        <end position="384"/>
    </location>
</feature>
<feature type="helix" evidence="19">
    <location>
        <begin position="395"/>
        <end position="403"/>
    </location>
</feature>
<feature type="helix" evidence="19">
    <location>
        <begin position="415"/>
        <end position="424"/>
    </location>
</feature>
<feature type="helix" evidence="19">
    <location>
        <begin position="429"/>
        <end position="431"/>
    </location>
</feature>
<feature type="turn" evidence="19">
    <location>
        <begin position="433"/>
        <end position="438"/>
    </location>
</feature>
<feature type="helix" evidence="19">
    <location>
        <begin position="439"/>
        <end position="444"/>
    </location>
</feature>
<feature type="helix" evidence="19">
    <location>
        <begin position="447"/>
        <end position="449"/>
    </location>
</feature>
<feature type="helix" evidence="19">
    <location>
        <begin position="454"/>
        <end position="458"/>
    </location>
</feature>
<feature type="helix" evidence="19">
    <location>
        <begin position="494"/>
        <end position="500"/>
    </location>
</feature>
<feature type="strand" evidence="19">
    <location>
        <begin position="505"/>
        <end position="507"/>
    </location>
</feature>
<feature type="helix" evidence="19">
    <location>
        <begin position="509"/>
        <end position="518"/>
    </location>
</feature>
<feature type="turn" evidence="19">
    <location>
        <begin position="519"/>
        <end position="524"/>
    </location>
</feature>
<accession>P32298</accession>
<accession>O00641</accession>
<accession>O00642</accession>
<accession>Q13293</accession>
<accession>Q13294</accession>
<accession>Q13295</accession>
<accession>Q14453</accession>
<accession>Q14725</accession>
<accession>Q15313</accession>
<accession>Q15314</accession>
<accession>Q15315</accession>
<accession>Q15316</accession>
<accession>Q17RH6</accession>
<accession>Q53EQ8</accession>
<proteinExistence type="evidence at protein level"/>
<sequence length="578" mass="66583">MELENIVANSLLLKARQGGYGKKSGRSKKWKEILTLPPVSQCSELRHSIEKDYSSLCDKQPIGRRLFRQFCDTKPTLKRHIEFLDAVAEYEVADDEDRSDCGLSILDRFFNDKLAAPLPEIPPDVVTECRLGLKEENPSKKAFEECTRVAHNYLRGEPFEEYQESSYFSQFLQWKWLERQPVTKNTFRHYRVLGKGGFGEVCACQVRATGKMYACKKLQKKRIKKRKGEAMALNEKRILEKVQSRFVVSLAYAYETKDALCLVLTIMNGGDLKFHIYNLGNPGFDEQRAVFYAAELCCGLEDLQRERIVYRDLKPENILLDDRGHIRISDLGLATEIPEGQRVRGRVGTVGYMAPEVVNNEKYTFSPDWWGLGCLIYEMIQGHSPFKKYKEKVKWEEVDQRIKNDTEEYSEKFSEDAKSICRMLLTKNPSKRLGCRGEGAAGVKQHPVFKDINFRRLEANMLEPPFCPDPHAVYCKDVLDIEQFSVVKGIYLDTADEDFYARFATGCVSIPWQNEMIESGCFKDINKSESEEALPLDLDKNIHTPVSRPNRGFFYRLFRRGGCLTMVPSEKEVEPKQC</sequence>
<gene>
    <name type="primary">GRK4</name>
    <name type="synonym">GPRK2L</name>
    <name type="synonym">GPRK4</name>
</gene>
<evidence type="ECO:0000250" key="1">
    <source>
        <dbReference type="UniProtKB" id="P70507"/>
    </source>
</evidence>
<evidence type="ECO:0000255" key="2">
    <source>
        <dbReference type="PROSITE-ProRule" id="PRU00159"/>
    </source>
</evidence>
<evidence type="ECO:0000255" key="3">
    <source>
        <dbReference type="PROSITE-ProRule" id="PRU00171"/>
    </source>
</evidence>
<evidence type="ECO:0000255" key="4">
    <source>
        <dbReference type="PROSITE-ProRule" id="PRU00618"/>
    </source>
</evidence>
<evidence type="ECO:0000255" key="5">
    <source>
        <dbReference type="PROSITE-ProRule" id="PRU10027"/>
    </source>
</evidence>
<evidence type="ECO:0000269" key="6">
    <source>
    </source>
</evidence>
<evidence type="ECO:0000269" key="7">
    <source>
    </source>
</evidence>
<evidence type="ECO:0000269" key="8">
    <source>
    </source>
</evidence>
<evidence type="ECO:0000269" key="9">
    <source>
    </source>
</evidence>
<evidence type="ECO:0000269" key="10">
    <source>
    </source>
</evidence>
<evidence type="ECO:0000269" key="11">
    <source>
    </source>
</evidence>
<evidence type="ECO:0000269" key="12">
    <source>
    </source>
</evidence>
<evidence type="ECO:0000269" key="13">
    <source>
    </source>
</evidence>
<evidence type="ECO:0000303" key="14">
    <source>
    </source>
</evidence>
<evidence type="ECO:0000303" key="15">
    <source>
    </source>
</evidence>
<evidence type="ECO:0000303" key="16">
    <source ref="5"/>
</evidence>
<evidence type="ECO:0000305" key="17"/>
<evidence type="ECO:0007744" key="18">
    <source>
    </source>
</evidence>
<evidence type="ECO:0007829" key="19">
    <source>
        <dbReference type="PDB" id="4YHJ"/>
    </source>
</evidence>
<organism>
    <name type="scientific">Homo sapiens</name>
    <name type="common">Human</name>
    <dbReference type="NCBI Taxonomy" id="9606"/>
    <lineage>
        <taxon>Eukaryota</taxon>
        <taxon>Metazoa</taxon>
        <taxon>Chordata</taxon>
        <taxon>Craniata</taxon>
        <taxon>Vertebrata</taxon>
        <taxon>Euteleostomi</taxon>
        <taxon>Mammalia</taxon>
        <taxon>Eutheria</taxon>
        <taxon>Euarchontoglires</taxon>
        <taxon>Primates</taxon>
        <taxon>Haplorrhini</taxon>
        <taxon>Catarrhini</taxon>
        <taxon>Hominidae</taxon>
        <taxon>Homo</taxon>
    </lineage>
</organism>